<name>RS18_RHOCB</name>
<reference key="1">
    <citation type="journal article" date="1997" name="Proc. Natl. Acad. Sci. U.S.A.">
        <title>Sequence of a 189-kb segment of the chromosome of Rhodobacter capsulatus SB1003.</title>
        <authorList>
            <person name="Vlcek C."/>
            <person name="Paces V."/>
            <person name="Maltsev N."/>
            <person name="Paces J."/>
            <person name="Haselkorn R."/>
            <person name="Fonstein M."/>
        </authorList>
    </citation>
    <scope>NUCLEOTIDE SEQUENCE [GENOMIC DNA]</scope>
    <source>
        <strain>ATCC BAA-309 / NBRC 16581 / SB1003</strain>
    </source>
</reference>
<reference key="2">
    <citation type="journal article" date="2010" name="J. Bacteriol.">
        <title>Complete genome sequence of the photosynthetic purple nonsulfur bacterium Rhodobacter capsulatus SB 1003.</title>
        <authorList>
            <person name="Strnad H."/>
            <person name="Lapidus A."/>
            <person name="Paces J."/>
            <person name="Ulbrich P."/>
            <person name="Vlcek C."/>
            <person name="Paces V."/>
            <person name="Haselkorn R."/>
        </authorList>
    </citation>
    <scope>NUCLEOTIDE SEQUENCE [LARGE SCALE GENOMIC DNA]</scope>
    <source>
        <strain>ATCC BAA-309 / NBRC 16581 / SB1003</strain>
    </source>
</reference>
<protein>
    <recommendedName>
        <fullName evidence="1">Small ribosomal subunit protein bS18</fullName>
    </recommendedName>
    <alternativeName>
        <fullName evidence="2">30S ribosomal protein S18</fullName>
    </alternativeName>
</protein>
<proteinExistence type="inferred from homology"/>
<keyword id="KW-1185">Reference proteome</keyword>
<keyword id="KW-0687">Ribonucleoprotein</keyword>
<keyword id="KW-0689">Ribosomal protein</keyword>
<keyword id="KW-0694">RNA-binding</keyword>
<keyword id="KW-0699">rRNA-binding</keyword>
<sequence length="75" mass="8662">MATKPFFRRRKVCPFSGDNAPKIDYKDVRLLQRYISERGKIVPARITAVSAKKQRELAQAIKRARFLALLPYAVK</sequence>
<organism>
    <name type="scientific">Rhodobacter capsulatus (strain ATCC BAA-309 / NBRC 16581 / SB1003)</name>
    <dbReference type="NCBI Taxonomy" id="272942"/>
    <lineage>
        <taxon>Bacteria</taxon>
        <taxon>Pseudomonadati</taxon>
        <taxon>Pseudomonadota</taxon>
        <taxon>Alphaproteobacteria</taxon>
        <taxon>Rhodobacterales</taxon>
        <taxon>Rhodobacter group</taxon>
        <taxon>Rhodobacter</taxon>
    </lineage>
</organism>
<gene>
    <name type="primary">rbsR</name>
    <name type="synonym">rpsR</name>
    <name type="ordered locus">RCAP_rcc02010</name>
</gene>
<accession>O68127</accession>
<accession>D5AUW5</accession>
<feature type="chain" id="PRO_0000111215" description="Small ribosomal subunit protein bS18">
    <location>
        <begin position="1"/>
        <end position="75"/>
    </location>
</feature>
<evidence type="ECO:0000255" key="1">
    <source>
        <dbReference type="HAMAP-Rule" id="MF_00270"/>
    </source>
</evidence>
<evidence type="ECO:0000305" key="2"/>
<comment type="function">
    <text evidence="1">Binds as a heterodimer with protein bS6 to the central domain of the 16S rRNA, where it helps stabilize the platform of the 30S subunit.</text>
</comment>
<comment type="subunit">
    <text evidence="1">Part of the 30S ribosomal subunit. Forms a tight heterodimer with protein bS6.</text>
</comment>
<comment type="similarity">
    <text evidence="1">Belongs to the bacterial ribosomal protein bS18 family.</text>
</comment>
<dbReference type="EMBL" id="AF010496">
    <property type="protein sequence ID" value="AAC16217.1"/>
    <property type="molecule type" value="Genomic_DNA"/>
</dbReference>
<dbReference type="EMBL" id="CP001312">
    <property type="protein sequence ID" value="ADE85754.1"/>
    <property type="molecule type" value="Genomic_DNA"/>
</dbReference>
<dbReference type="PIR" id="T03564">
    <property type="entry name" value="T03564"/>
</dbReference>
<dbReference type="RefSeq" id="WP_013067733.1">
    <property type="nucleotide sequence ID" value="NC_014034.1"/>
</dbReference>
<dbReference type="SMR" id="O68127"/>
<dbReference type="STRING" id="272942.RCAP_rcc02010"/>
<dbReference type="GeneID" id="31490874"/>
<dbReference type="KEGG" id="rcp:RCAP_rcc02010"/>
<dbReference type="eggNOG" id="COG0238">
    <property type="taxonomic scope" value="Bacteria"/>
</dbReference>
<dbReference type="HOGENOM" id="CLU_148710_2_3_5"/>
<dbReference type="OrthoDB" id="9812008at2"/>
<dbReference type="Proteomes" id="UP000002361">
    <property type="component" value="Chromosome"/>
</dbReference>
<dbReference type="GO" id="GO:0022627">
    <property type="term" value="C:cytosolic small ribosomal subunit"/>
    <property type="evidence" value="ECO:0007669"/>
    <property type="project" value="TreeGrafter"/>
</dbReference>
<dbReference type="GO" id="GO:0070181">
    <property type="term" value="F:small ribosomal subunit rRNA binding"/>
    <property type="evidence" value="ECO:0007669"/>
    <property type="project" value="TreeGrafter"/>
</dbReference>
<dbReference type="GO" id="GO:0003735">
    <property type="term" value="F:structural constituent of ribosome"/>
    <property type="evidence" value="ECO:0007669"/>
    <property type="project" value="InterPro"/>
</dbReference>
<dbReference type="GO" id="GO:0006412">
    <property type="term" value="P:translation"/>
    <property type="evidence" value="ECO:0007669"/>
    <property type="project" value="UniProtKB-UniRule"/>
</dbReference>
<dbReference type="Gene3D" id="4.10.640.10">
    <property type="entry name" value="Ribosomal protein S18"/>
    <property type="match status" value="1"/>
</dbReference>
<dbReference type="HAMAP" id="MF_00270">
    <property type="entry name" value="Ribosomal_bS18"/>
    <property type="match status" value="1"/>
</dbReference>
<dbReference type="InterPro" id="IPR001648">
    <property type="entry name" value="Ribosomal_bS18"/>
</dbReference>
<dbReference type="InterPro" id="IPR018275">
    <property type="entry name" value="Ribosomal_bS18_CS"/>
</dbReference>
<dbReference type="InterPro" id="IPR036870">
    <property type="entry name" value="Ribosomal_bS18_sf"/>
</dbReference>
<dbReference type="NCBIfam" id="TIGR00165">
    <property type="entry name" value="S18"/>
    <property type="match status" value="1"/>
</dbReference>
<dbReference type="PANTHER" id="PTHR13479">
    <property type="entry name" value="30S RIBOSOMAL PROTEIN S18"/>
    <property type="match status" value="1"/>
</dbReference>
<dbReference type="PANTHER" id="PTHR13479:SF40">
    <property type="entry name" value="SMALL RIBOSOMAL SUBUNIT PROTEIN BS18M"/>
    <property type="match status" value="1"/>
</dbReference>
<dbReference type="Pfam" id="PF01084">
    <property type="entry name" value="Ribosomal_S18"/>
    <property type="match status" value="1"/>
</dbReference>
<dbReference type="PRINTS" id="PR00974">
    <property type="entry name" value="RIBOSOMALS18"/>
</dbReference>
<dbReference type="SUPFAM" id="SSF46911">
    <property type="entry name" value="Ribosomal protein S18"/>
    <property type="match status" value="1"/>
</dbReference>
<dbReference type="PROSITE" id="PS00057">
    <property type="entry name" value="RIBOSOMAL_S18"/>
    <property type="match status" value="1"/>
</dbReference>